<gene>
    <name type="primary">npr</name>
</gene>
<protein>
    <recommendedName>
        <fullName>Bacillolysin</fullName>
        <ecNumber>3.4.24.28</ecNumber>
    </recommendedName>
    <alternativeName>
        <fullName>Neutral protease</fullName>
    </alternativeName>
</protein>
<name>NPRE_BREBE</name>
<evidence type="ECO:0000255" key="1"/>
<evidence type="ECO:0000255" key="2">
    <source>
        <dbReference type="PROSITE-ProRule" id="PRU10095"/>
    </source>
</evidence>
<evidence type="ECO:0000269" key="3">
    <source>
    </source>
</evidence>
<evidence type="ECO:0000305" key="4"/>
<feature type="signal peptide" evidence="1">
    <location>
        <begin position="1"/>
        <end position="28"/>
    </location>
</feature>
<feature type="propeptide" id="PRO_0000028596" description="Activation peptide" evidence="3">
    <location>
        <begin position="29"/>
        <end position="223"/>
    </location>
</feature>
<feature type="chain" id="PRO_0000028597" description="Bacillolysin">
    <location>
        <begin position="224"/>
        <end position="527"/>
    </location>
</feature>
<feature type="active site" evidence="2">
    <location>
        <position position="359"/>
    </location>
</feature>
<feature type="active site" description="Proton donor" evidence="2">
    <location>
        <position position="442"/>
    </location>
</feature>
<feature type="binding site" evidence="1">
    <location>
        <position position="276"/>
    </location>
    <ligand>
        <name>Ca(2+)</name>
        <dbReference type="ChEBI" id="CHEBI:29108"/>
        <label>1</label>
    </ligand>
</feature>
<feature type="binding site" evidence="1">
    <location>
        <position position="278"/>
    </location>
    <ligand>
        <name>Ca(2+)</name>
        <dbReference type="ChEBI" id="CHEBI:29108"/>
        <label>1</label>
    </ligand>
</feature>
<feature type="binding site" evidence="1">
    <location>
        <position position="354"/>
    </location>
    <ligand>
        <name>Ca(2+)</name>
        <dbReference type="ChEBI" id="CHEBI:29108"/>
        <label>2</label>
    </ligand>
</feature>
<feature type="binding site" evidence="2">
    <location>
        <position position="358"/>
    </location>
    <ligand>
        <name>Zn(2+)</name>
        <dbReference type="ChEBI" id="CHEBI:29105"/>
        <note>catalytic</note>
    </ligand>
</feature>
<feature type="binding site" evidence="2">
    <location>
        <position position="362"/>
    </location>
    <ligand>
        <name>Zn(2+)</name>
        <dbReference type="ChEBI" id="CHEBI:29105"/>
        <note>catalytic</note>
    </ligand>
</feature>
<feature type="binding site" evidence="2">
    <location>
        <position position="382"/>
    </location>
    <ligand>
        <name>Zn(2+)</name>
        <dbReference type="ChEBI" id="CHEBI:29105"/>
        <note>catalytic</note>
    </ligand>
</feature>
<feature type="binding site" evidence="1">
    <location>
        <position position="393"/>
    </location>
    <ligand>
        <name>Ca(2+)</name>
        <dbReference type="ChEBI" id="CHEBI:29108"/>
        <label>2</label>
    </ligand>
</feature>
<feature type="binding site" evidence="1">
    <location>
        <position position="393"/>
    </location>
    <ligand>
        <name>Ca(2+)</name>
        <dbReference type="ChEBI" id="CHEBI:29108"/>
        <label>3</label>
    </ligand>
</feature>
<feature type="binding site" evidence="1">
    <location>
        <position position="394"/>
    </location>
    <ligand>
        <name>Ca(2+)</name>
        <dbReference type="ChEBI" id="CHEBI:29108"/>
        <label>3</label>
    </ligand>
</feature>
<feature type="binding site" evidence="1">
    <location>
        <position position="396"/>
    </location>
    <ligand>
        <name>Ca(2+)</name>
        <dbReference type="ChEBI" id="CHEBI:29108"/>
        <label>2</label>
    </ligand>
</feature>
<feature type="binding site" evidence="1">
    <location>
        <position position="396"/>
    </location>
    <ligand>
        <name>Ca(2+)</name>
        <dbReference type="ChEBI" id="CHEBI:29108"/>
        <label>3</label>
    </ligand>
</feature>
<feature type="binding site" evidence="1">
    <location>
        <position position="401"/>
    </location>
    <ligand>
        <name>Ca(2+)</name>
        <dbReference type="ChEBI" id="CHEBI:29108"/>
        <label>2</label>
    </ligand>
</feature>
<feature type="binding site" evidence="1">
    <location>
        <position position="401"/>
    </location>
    <ligand>
        <name>Ca(2+)</name>
        <dbReference type="ChEBI" id="CHEBI:29108"/>
        <label>3</label>
    </ligand>
</feature>
<feature type="binding site" evidence="1">
    <location>
        <position position="404"/>
    </location>
    <ligand>
        <name>Ca(2+)</name>
        <dbReference type="ChEBI" id="CHEBI:29108"/>
        <label>4</label>
    </ligand>
</feature>
<feature type="binding site" evidence="1">
    <location>
        <position position="405"/>
    </location>
    <ligand>
        <name>Ca(2+)</name>
        <dbReference type="ChEBI" id="CHEBI:29108"/>
        <label>4</label>
    </ligand>
</feature>
<feature type="binding site" evidence="1">
    <location>
        <position position="411"/>
    </location>
    <ligand>
        <name>Ca(2+)</name>
        <dbReference type="ChEBI" id="CHEBI:29108"/>
        <label>4</label>
    </ligand>
</feature>
<dbReference type="EC" id="3.4.24.28"/>
<dbReference type="EMBL" id="X61286">
    <property type="protein sequence ID" value="CAA43589.1"/>
    <property type="molecule type" value="Genomic_DNA"/>
</dbReference>
<dbReference type="PIR" id="PN0114">
    <property type="entry name" value="PN0114"/>
</dbReference>
<dbReference type="SMR" id="P43263"/>
<dbReference type="MEROPS" id="M04.001"/>
<dbReference type="GO" id="GO:0005576">
    <property type="term" value="C:extracellular region"/>
    <property type="evidence" value="ECO:0007669"/>
    <property type="project" value="UniProtKB-SubCell"/>
</dbReference>
<dbReference type="GO" id="GO:0046872">
    <property type="term" value="F:metal ion binding"/>
    <property type="evidence" value="ECO:0007669"/>
    <property type="project" value="UniProtKB-KW"/>
</dbReference>
<dbReference type="GO" id="GO:0004222">
    <property type="term" value="F:metalloendopeptidase activity"/>
    <property type="evidence" value="ECO:0007669"/>
    <property type="project" value="InterPro"/>
</dbReference>
<dbReference type="GO" id="GO:0006508">
    <property type="term" value="P:proteolysis"/>
    <property type="evidence" value="ECO:0007669"/>
    <property type="project" value="UniProtKB-KW"/>
</dbReference>
<dbReference type="CDD" id="cd09597">
    <property type="entry name" value="M4_TLP"/>
    <property type="match status" value="1"/>
</dbReference>
<dbReference type="FunFam" id="1.10.390.10:FF:000012">
    <property type="entry name" value="Thermolysin"/>
    <property type="match status" value="1"/>
</dbReference>
<dbReference type="Gene3D" id="3.10.170.10">
    <property type="match status" value="1"/>
</dbReference>
<dbReference type="Gene3D" id="3.10.450.40">
    <property type="match status" value="1"/>
</dbReference>
<dbReference type="Gene3D" id="3.10.450.490">
    <property type="match status" value="1"/>
</dbReference>
<dbReference type="Gene3D" id="1.10.390.10">
    <property type="entry name" value="Neutral Protease Domain 2"/>
    <property type="match status" value="1"/>
</dbReference>
<dbReference type="InterPro" id="IPR011096">
    <property type="entry name" value="FTP_domain"/>
</dbReference>
<dbReference type="InterPro" id="IPR025711">
    <property type="entry name" value="PepSY"/>
</dbReference>
<dbReference type="InterPro" id="IPR023612">
    <property type="entry name" value="Peptidase_M4"/>
</dbReference>
<dbReference type="InterPro" id="IPR027268">
    <property type="entry name" value="Peptidase_M4/M1_CTD_sf"/>
</dbReference>
<dbReference type="InterPro" id="IPR001570">
    <property type="entry name" value="Peptidase_M4_C_domain"/>
</dbReference>
<dbReference type="InterPro" id="IPR013856">
    <property type="entry name" value="Peptidase_M4_domain"/>
</dbReference>
<dbReference type="InterPro" id="IPR050728">
    <property type="entry name" value="Zinc_Metalloprotease_M4"/>
</dbReference>
<dbReference type="PANTHER" id="PTHR33794">
    <property type="entry name" value="BACILLOLYSIN"/>
    <property type="match status" value="1"/>
</dbReference>
<dbReference type="PANTHER" id="PTHR33794:SF3">
    <property type="entry name" value="NEUTRAL PROTEASE B"/>
    <property type="match status" value="1"/>
</dbReference>
<dbReference type="Pfam" id="PF07504">
    <property type="entry name" value="FTP"/>
    <property type="match status" value="1"/>
</dbReference>
<dbReference type="Pfam" id="PF03413">
    <property type="entry name" value="PepSY"/>
    <property type="match status" value="1"/>
</dbReference>
<dbReference type="Pfam" id="PF01447">
    <property type="entry name" value="Peptidase_M4"/>
    <property type="match status" value="1"/>
</dbReference>
<dbReference type="Pfam" id="PF02868">
    <property type="entry name" value="Peptidase_M4_C"/>
    <property type="match status" value="1"/>
</dbReference>
<dbReference type="PRINTS" id="PR00730">
    <property type="entry name" value="THERMOLYSIN"/>
</dbReference>
<dbReference type="SUPFAM" id="SSF55486">
    <property type="entry name" value="Metalloproteases ('zincins'), catalytic domain"/>
    <property type="match status" value="1"/>
</dbReference>
<dbReference type="PROSITE" id="PS00142">
    <property type="entry name" value="ZINC_PROTEASE"/>
    <property type="match status" value="1"/>
</dbReference>
<proteinExistence type="evidence at protein level"/>
<comment type="function">
    <text>Extracellular zinc metalloprotease.</text>
</comment>
<comment type="catalytic activity">
    <reaction>
        <text>Similar, but not identical, to that of thermolysin.</text>
        <dbReference type="EC" id="3.4.24.28"/>
    </reaction>
</comment>
<comment type="cofactor">
    <cofactor evidence="4">
        <name>Ca(2+)</name>
        <dbReference type="ChEBI" id="CHEBI:29108"/>
    </cofactor>
    <text evidence="4">Binds 4 Ca(2+) ions per subunit.</text>
</comment>
<comment type="cofactor">
    <cofactor evidence="4">
        <name>Zn(2+)</name>
        <dbReference type="ChEBI" id="CHEBI:29105"/>
    </cofactor>
    <text evidence="4">Binds 1 zinc ion per subunit.</text>
</comment>
<comment type="biophysicochemical properties">
    <temperatureDependence>
        <text>Thermolabile.</text>
    </temperatureDependence>
</comment>
<comment type="subcellular location">
    <subcellularLocation>
        <location>Secreted</location>
    </subcellularLocation>
</comment>
<comment type="similarity">
    <text evidence="4">Belongs to the peptidase M4 family.</text>
</comment>
<organism>
    <name type="scientific">Brevibacillus brevis</name>
    <name type="common">Bacillus brevis</name>
    <dbReference type="NCBI Taxonomy" id="1393"/>
    <lineage>
        <taxon>Bacteria</taxon>
        <taxon>Bacillati</taxon>
        <taxon>Bacillota</taxon>
        <taxon>Bacilli</taxon>
        <taxon>Bacillales</taxon>
        <taxon>Paenibacillaceae</taxon>
        <taxon>Brevibacillus</taxon>
    </lineage>
</organism>
<sequence>MKKSYLATSLTLSIAVGVSGFTSVPAFAKTKIDYHKQWDTPQYIGEVWEPEGAKGDDVVWSYLEKYKDEFRIQGNVEDHFEIVNEARNKETDTKHYRLQEVYNGIPIYGFQQTVHIDADGNVTSFLGQFIPDLDSNKQLKKKPKLNEQKAVKQAIKDVEGEVGEKPDFIQDPEAKLYIYVHEDESYLAYAVELNFLDPEPGRWMYFIDAHSGDVINKYNMLDHVTATGKGVLGDTKQFETTKQGSTYMLKDTTRGKGIETYTANNRTSLPGTLMTDSDNYWTDGAAVDAHAHAQKTYDYFRNVHNRNSYDGNGAVIRSTVHYSTRYNNAFWNGSQMVYGDGDGTTFLPLSGGLDVVAHELTHAVTERTAGLVYQNESGALNESMSDIFGAMVDNDDWLMGEDIYTPGRSGDALRSLQDPAAYGDPDHYSKRYTGSQDNGGVHTNSGINNKAAYLLAEGGTHYGVRVNGIGRTDTAKIYYHALTHYLTPYSNFSAMRRAAVLSATDLFGANSRQVQAVNAAYDAVGVK</sequence>
<reference key="1">
    <citation type="journal article" date="1990" name="Mol. Biol. (Mosk.)">
        <title>Structure of the Bacillus brevis metalloprotease gene.</title>
        <authorList>
            <person name="Avakov A.S."/>
            <person name="Bolotin A.P."/>
            <person name="Sorokin A.V."/>
        </authorList>
    </citation>
    <scope>NUCLEOTIDE SEQUENCE [GENOMIC DNA]</scope>
    <source>
        <strain>7882</strain>
    </source>
</reference>
<reference key="2">
    <citation type="journal article" date="1990" name="Mol. Biol. (Mosk.)">
        <title>Analysis of the structure of Bacillus brevis neutral proteinase and its biosynthesis in Bacillus subtilis cells.</title>
        <authorList>
            <person name="Kaidalova N.V."/>
            <person name="Akimkina T.V."/>
            <person name="Khodova O.D."/>
            <person name="Kostrov S.V."/>
            <person name="Strongin A.Y."/>
        </authorList>
    </citation>
    <scope>PROTEIN SEQUENCE OF 224-228</scope>
    <scope>CHARACTERIZATION</scope>
</reference>
<keyword id="KW-0106">Calcium</keyword>
<keyword id="KW-0903">Direct protein sequencing</keyword>
<keyword id="KW-0378">Hydrolase</keyword>
<keyword id="KW-0479">Metal-binding</keyword>
<keyword id="KW-0482">Metalloprotease</keyword>
<keyword id="KW-0645">Protease</keyword>
<keyword id="KW-0964">Secreted</keyword>
<keyword id="KW-0732">Signal</keyword>
<keyword id="KW-0862">Zinc</keyword>
<keyword id="KW-0865">Zymogen</keyword>
<accession>P43263</accession>